<proteinExistence type="inferred from homology"/>
<accession>Q89K77</accession>
<feature type="chain" id="PRO_0000182274" description="Transcriptional repressor NrdR">
    <location>
        <begin position="1"/>
        <end position="160"/>
    </location>
</feature>
<feature type="domain" description="ATP-cone" evidence="1">
    <location>
        <begin position="49"/>
        <end position="139"/>
    </location>
</feature>
<feature type="zinc finger region" evidence="1">
    <location>
        <begin position="3"/>
        <end position="34"/>
    </location>
</feature>
<feature type="region of interest" description="Disordered" evidence="2">
    <location>
        <begin position="1"/>
        <end position="20"/>
    </location>
</feature>
<feature type="compositionally biased region" description="Polar residues" evidence="2">
    <location>
        <begin position="1"/>
        <end position="11"/>
    </location>
</feature>
<name>NRDR_BRADU</name>
<sequence>MRCPNCNSLDTQVKDSRPTEDSSVIRRRRVCVACNFRFTTFERVQLRELTVIKRNGRRVPFDRDKLMRSVQISLRKRQVEPERVEKMVSTIVRELETGGEAEISSEVIGETVMEHLRTLDDVAYVRFASVYRNFREAKDFADVLGELSGEEEARLAAIRK</sequence>
<organism>
    <name type="scientific">Bradyrhizobium diazoefficiens (strain JCM 10833 / BCRC 13528 / IAM 13628 / NBRC 14792 / USDA 110)</name>
    <dbReference type="NCBI Taxonomy" id="224911"/>
    <lineage>
        <taxon>Bacteria</taxon>
        <taxon>Pseudomonadati</taxon>
        <taxon>Pseudomonadota</taxon>
        <taxon>Alphaproteobacteria</taxon>
        <taxon>Hyphomicrobiales</taxon>
        <taxon>Nitrobacteraceae</taxon>
        <taxon>Bradyrhizobium</taxon>
    </lineage>
</organism>
<comment type="function">
    <text evidence="1">Negatively regulates transcription of bacterial ribonucleotide reductase nrd genes and operons by binding to NrdR-boxes.</text>
</comment>
<comment type="cofactor">
    <cofactor evidence="1">
        <name>Zn(2+)</name>
        <dbReference type="ChEBI" id="CHEBI:29105"/>
    </cofactor>
    <text evidence="1">Binds 1 zinc ion.</text>
</comment>
<comment type="similarity">
    <text evidence="1">Belongs to the NrdR family.</text>
</comment>
<gene>
    <name evidence="1" type="primary">nrdR</name>
    <name type="ordered locus">bll5032</name>
</gene>
<protein>
    <recommendedName>
        <fullName evidence="1">Transcriptional repressor NrdR</fullName>
    </recommendedName>
</protein>
<keyword id="KW-0067">ATP-binding</keyword>
<keyword id="KW-0238">DNA-binding</keyword>
<keyword id="KW-0479">Metal-binding</keyword>
<keyword id="KW-0547">Nucleotide-binding</keyword>
<keyword id="KW-1185">Reference proteome</keyword>
<keyword id="KW-0678">Repressor</keyword>
<keyword id="KW-0804">Transcription</keyword>
<keyword id="KW-0805">Transcription regulation</keyword>
<keyword id="KW-0862">Zinc</keyword>
<keyword id="KW-0863">Zinc-finger</keyword>
<reference key="1">
    <citation type="journal article" date="2002" name="DNA Res.">
        <title>Complete genomic sequence of nitrogen-fixing symbiotic bacterium Bradyrhizobium japonicum USDA110.</title>
        <authorList>
            <person name="Kaneko T."/>
            <person name="Nakamura Y."/>
            <person name="Sato S."/>
            <person name="Minamisawa K."/>
            <person name="Uchiumi T."/>
            <person name="Sasamoto S."/>
            <person name="Watanabe A."/>
            <person name="Idesawa K."/>
            <person name="Iriguchi M."/>
            <person name="Kawashima K."/>
            <person name="Kohara M."/>
            <person name="Matsumoto M."/>
            <person name="Shimpo S."/>
            <person name="Tsuruoka H."/>
            <person name="Wada T."/>
            <person name="Yamada M."/>
            <person name="Tabata S."/>
        </authorList>
    </citation>
    <scope>NUCLEOTIDE SEQUENCE [LARGE SCALE GENOMIC DNA]</scope>
    <source>
        <strain>JCM 10833 / BCRC 13528 / IAM 13628 / NBRC 14792 / USDA 110</strain>
    </source>
</reference>
<evidence type="ECO:0000255" key="1">
    <source>
        <dbReference type="HAMAP-Rule" id="MF_00440"/>
    </source>
</evidence>
<evidence type="ECO:0000256" key="2">
    <source>
        <dbReference type="SAM" id="MobiDB-lite"/>
    </source>
</evidence>
<dbReference type="EMBL" id="BA000040">
    <property type="protein sequence ID" value="BAC50297.1"/>
    <property type="molecule type" value="Genomic_DNA"/>
</dbReference>
<dbReference type="RefSeq" id="NP_771672.1">
    <property type="nucleotide sequence ID" value="NC_004463.1"/>
</dbReference>
<dbReference type="RefSeq" id="WP_011087793.1">
    <property type="nucleotide sequence ID" value="NZ_CP011360.1"/>
</dbReference>
<dbReference type="SMR" id="Q89K77"/>
<dbReference type="FunCoup" id="Q89K77">
    <property type="interactions" value="336"/>
</dbReference>
<dbReference type="STRING" id="224911.AAV28_22520"/>
<dbReference type="EnsemblBacteria" id="BAC50297">
    <property type="protein sequence ID" value="BAC50297"/>
    <property type="gene ID" value="BAC50297"/>
</dbReference>
<dbReference type="GeneID" id="93212023"/>
<dbReference type="KEGG" id="bja:bll5032"/>
<dbReference type="PATRIC" id="fig|224911.44.peg.4896"/>
<dbReference type="eggNOG" id="COG1327">
    <property type="taxonomic scope" value="Bacteria"/>
</dbReference>
<dbReference type="HOGENOM" id="CLU_108412_0_1_5"/>
<dbReference type="InParanoid" id="Q89K77"/>
<dbReference type="OrthoDB" id="9807461at2"/>
<dbReference type="PhylomeDB" id="Q89K77"/>
<dbReference type="Proteomes" id="UP000002526">
    <property type="component" value="Chromosome"/>
</dbReference>
<dbReference type="GO" id="GO:0005524">
    <property type="term" value="F:ATP binding"/>
    <property type="evidence" value="ECO:0007669"/>
    <property type="project" value="UniProtKB-KW"/>
</dbReference>
<dbReference type="GO" id="GO:0003690">
    <property type="term" value="F:double-stranded DNA binding"/>
    <property type="evidence" value="ECO:0000318"/>
    <property type="project" value="GO_Central"/>
</dbReference>
<dbReference type="GO" id="GO:0008270">
    <property type="term" value="F:zinc ion binding"/>
    <property type="evidence" value="ECO:0007669"/>
    <property type="project" value="UniProtKB-UniRule"/>
</dbReference>
<dbReference type="GO" id="GO:0045892">
    <property type="term" value="P:negative regulation of DNA-templated transcription"/>
    <property type="evidence" value="ECO:0000318"/>
    <property type="project" value="GO_Central"/>
</dbReference>
<dbReference type="HAMAP" id="MF_00440">
    <property type="entry name" value="NrdR"/>
    <property type="match status" value="1"/>
</dbReference>
<dbReference type="InterPro" id="IPR005144">
    <property type="entry name" value="ATP-cone_dom"/>
</dbReference>
<dbReference type="InterPro" id="IPR055173">
    <property type="entry name" value="NrdR-like_N"/>
</dbReference>
<dbReference type="InterPro" id="IPR003796">
    <property type="entry name" value="RNR_NrdR-like"/>
</dbReference>
<dbReference type="NCBIfam" id="TIGR00244">
    <property type="entry name" value="transcriptional regulator NrdR"/>
    <property type="match status" value="1"/>
</dbReference>
<dbReference type="PANTHER" id="PTHR30455">
    <property type="entry name" value="TRANSCRIPTIONAL REPRESSOR NRDR"/>
    <property type="match status" value="1"/>
</dbReference>
<dbReference type="PANTHER" id="PTHR30455:SF2">
    <property type="entry name" value="TRANSCRIPTIONAL REPRESSOR NRDR"/>
    <property type="match status" value="1"/>
</dbReference>
<dbReference type="Pfam" id="PF03477">
    <property type="entry name" value="ATP-cone"/>
    <property type="match status" value="1"/>
</dbReference>
<dbReference type="Pfam" id="PF22811">
    <property type="entry name" value="Zn_ribbon_NrdR"/>
    <property type="match status" value="1"/>
</dbReference>
<dbReference type="PROSITE" id="PS51161">
    <property type="entry name" value="ATP_CONE"/>
    <property type="match status" value="1"/>
</dbReference>